<reference key="1">
    <citation type="journal article" date="2004" name="Proc. Natl. Acad. Sci. U.S.A.">
        <title>The diploid genome sequence of Candida albicans.</title>
        <authorList>
            <person name="Jones T."/>
            <person name="Federspiel N.A."/>
            <person name="Chibana H."/>
            <person name="Dungan J."/>
            <person name="Kalman S."/>
            <person name="Magee B.B."/>
            <person name="Newport G."/>
            <person name="Thorstenson Y.R."/>
            <person name="Agabian N."/>
            <person name="Magee P.T."/>
            <person name="Davis R.W."/>
            <person name="Scherer S."/>
        </authorList>
    </citation>
    <scope>NUCLEOTIDE SEQUENCE [LARGE SCALE GENOMIC DNA]</scope>
    <source>
        <strain>SC5314 / ATCC MYA-2876</strain>
    </source>
</reference>
<reference key="2">
    <citation type="journal article" date="2007" name="Genome Biol.">
        <title>Assembly of the Candida albicans genome into sixteen supercontigs aligned on the eight chromosomes.</title>
        <authorList>
            <person name="van het Hoog M."/>
            <person name="Rast T.J."/>
            <person name="Martchenko M."/>
            <person name="Grindle S."/>
            <person name="Dignard D."/>
            <person name="Hogues H."/>
            <person name="Cuomo C."/>
            <person name="Berriman M."/>
            <person name="Scherer S."/>
            <person name="Magee B.B."/>
            <person name="Whiteway M."/>
            <person name="Chibana H."/>
            <person name="Nantel A."/>
            <person name="Magee P.T."/>
        </authorList>
    </citation>
    <scope>GENOME REANNOTATION</scope>
    <source>
        <strain>SC5314 / ATCC MYA-2876</strain>
    </source>
</reference>
<reference key="3">
    <citation type="journal article" date="2013" name="Genome Biol.">
        <title>Assembly of a phased diploid Candida albicans genome facilitates allele-specific measurements and provides a simple model for repeat and indel structure.</title>
        <authorList>
            <person name="Muzzey D."/>
            <person name="Schwartz K."/>
            <person name="Weissman J.S."/>
            <person name="Sherlock G."/>
        </authorList>
    </citation>
    <scope>NUCLEOTIDE SEQUENCE [LARGE SCALE GENOMIC DNA]</scope>
    <scope>GENOME REANNOTATION</scope>
    <source>
        <strain>SC5314 / ATCC MYA-2876</strain>
    </source>
</reference>
<reference key="4">
    <citation type="journal article" date="2001" name="Mol. Microbiol.">
        <title>Transcript profiling in Candida albicans reveals new cellular functions for the transcriptional repressors CaTup1, CaMig1 and CaNrg1.</title>
        <authorList>
            <person name="Murad A.M."/>
            <person name="d'Enfert C."/>
            <person name="Gaillardin C."/>
            <person name="Tournu H."/>
            <person name="Tekaia F."/>
            <person name="Talibi D."/>
            <person name="Marechal D."/>
            <person name="Marchais V."/>
            <person name="Cottin J."/>
            <person name="Brown A.J."/>
        </authorList>
    </citation>
    <scope>INDUCTION</scope>
</reference>
<reference key="5">
    <citation type="journal article" date="2002" name="Proc. Natl. Acad. Sci. U.S.A.">
        <title>Metabolic specialization associated with phenotypic switching in Candidaalbicans.</title>
        <authorList>
            <person name="Lan C.Y."/>
            <person name="Newport G."/>
            <person name="Murillo L.A."/>
            <person name="Jones T."/>
            <person name="Scherer S."/>
            <person name="Davis R.W."/>
            <person name="Agabian N."/>
        </authorList>
    </citation>
    <scope>INDUCTION</scope>
</reference>
<reference key="6">
    <citation type="journal article" date="2005" name="Antimicrob. Agents Chemother.">
        <title>Genome-wide expression profiling of the response to azole, polyene, echinocandin, and pyrimidine antifungal agents in Candida albicans.</title>
        <authorList>
            <person name="Liu T.T."/>
            <person name="Lee R.E."/>
            <person name="Barker K.S."/>
            <person name="Lee R.E."/>
            <person name="Wei L."/>
            <person name="Homayouni R."/>
            <person name="Rogers P.D."/>
        </authorList>
    </citation>
    <scope>INDUCTION</scope>
</reference>
<reference key="7">
    <citation type="journal article" date="2008" name="BMC Genomics">
        <title>MFS transportome of the human pathogenic yeast Candida albicans.</title>
        <authorList>
            <person name="Gaur M."/>
            <person name="Puri N."/>
            <person name="Manoharlal R."/>
            <person name="Rai V."/>
            <person name="Mukhopadhayay G."/>
            <person name="Choudhury D."/>
            <person name="Prasad R."/>
        </authorList>
    </citation>
    <scope>IDENTIFICATION</scope>
</reference>
<reference key="8">
    <citation type="journal article" date="2011" name="J. Biol. Chem.">
        <title>Cap2-HAP complex is a critical transcriptional regulator that has dual but contrasting roles in regulation of iron homeostasis in Candida albicans.</title>
        <authorList>
            <person name="Singh R.P."/>
            <person name="Prasad H.K."/>
            <person name="Sinha I."/>
            <person name="Agarwal N."/>
            <person name="Natarajan K."/>
        </authorList>
    </citation>
    <scope>INDUCTION</scope>
</reference>
<reference key="9">
    <citation type="journal article" date="2013" name="PLoS ONE">
        <title>Global transcriptome sequencing identifies chlamydospore specific markers in Candida albicans and Candida dubliniensis.</title>
        <authorList>
            <person name="Palige K."/>
            <person name="Linde J."/>
            <person name="Martin R."/>
            <person name="Bottcher B."/>
            <person name="Citiulo F."/>
            <person name="Sullivan D.J."/>
            <person name="Weber J."/>
            <person name="Staib C."/>
            <person name="Rupp S."/>
            <person name="Hube B."/>
            <person name="Morschhauser J."/>
            <person name="Staib P."/>
        </authorList>
    </citation>
    <scope>INDUCTION</scope>
</reference>
<reference key="10">
    <citation type="journal article" date="2014" name="Biochem. J.">
        <title>Novel role of a family of major facilitator transporters in biofilm development and virulence of Candida albicans.</title>
        <authorList>
            <person name="Shah A.H."/>
            <person name="Singh A."/>
            <person name="Dhamgaye S."/>
            <person name="Chauhan N."/>
            <person name="Vandeputte P."/>
            <person name="Suneetha K.J."/>
            <person name="Kaur R."/>
            <person name="Mukherjee P.K."/>
            <person name="Chandra J."/>
            <person name="Ghannoum M.A."/>
            <person name="Sanglard D."/>
            <person name="Goswami S.K."/>
            <person name="Prasad R."/>
        </authorList>
    </citation>
    <scope>SUBCELLULAR LOCATION</scope>
    <scope>DISRUPTION PHENOTYPE</scope>
    <scope>FUNCTION</scope>
</reference>
<keyword id="KW-1003">Cell membrane</keyword>
<keyword id="KW-0472">Membrane</keyword>
<keyword id="KW-1185">Reference proteome</keyword>
<keyword id="KW-0812">Transmembrane</keyword>
<keyword id="KW-1133">Transmembrane helix</keyword>
<keyword id="KW-0813">Transport</keyword>
<keyword id="KW-0843">Virulence</keyword>
<dbReference type="EMBL" id="CP017630">
    <property type="protein sequence ID" value="AOW31159.1"/>
    <property type="molecule type" value="Genomic_DNA"/>
</dbReference>
<dbReference type="SMR" id="Q5A6P6"/>
<dbReference type="FunCoup" id="Q5A6P6">
    <property type="interactions" value="70"/>
</dbReference>
<dbReference type="STRING" id="237561.Q5A6P6"/>
<dbReference type="EnsemblFungi" id="CR_04210C_A-T">
    <property type="protein sequence ID" value="CR_04210C_A-T-p1"/>
    <property type="gene ID" value="CR_04210C_A"/>
</dbReference>
<dbReference type="KEGG" id="cal:CAALFM_CR04210CA"/>
<dbReference type="CGD" id="CAL0000179875">
    <property type="gene designation" value="QDR1"/>
</dbReference>
<dbReference type="VEuPathDB" id="FungiDB:CR_04210C_A"/>
<dbReference type="eggNOG" id="KOG0255">
    <property type="taxonomic scope" value="Eukaryota"/>
</dbReference>
<dbReference type="HOGENOM" id="CLU_008455_8_4_1"/>
<dbReference type="InParanoid" id="Q5A6P6"/>
<dbReference type="OMA" id="NWNYRRR"/>
<dbReference type="OrthoDB" id="440553at2759"/>
<dbReference type="PRO" id="PR:Q5A6P6"/>
<dbReference type="Proteomes" id="UP000000559">
    <property type="component" value="Chromosome R"/>
</dbReference>
<dbReference type="GO" id="GO:0045121">
    <property type="term" value="C:membrane raft"/>
    <property type="evidence" value="ECO:0000314"/>
    <property type="project" value="CGD"/>
</dbReference>
<dbReference type="GO" id="GO:0005886">
    <property type="term" value="C:plasma membrane"/>
    <property type="evidence" value="ECO:0000318"/>
    <property type="project" value="GO_Central"/>
</dbReference>
<dbReference type="GO" id="GO:0022857">
    <property type="term" value="F:transmembrane transporter activity"/>
    <property type="evidence" value="ECO:0000318"/>
    <property type="project" value="GO_Central"/>
</dbReference>
<dbReference type="GO" id="GO:0055088">
    <property type="term" value="P:lipid homeostasis"/>
    <property type="evidence" value="ECO:0000315"/>
    <property type="project" value="CGD"/>
</dbReference>
<dbReference type="GO" id="GO:0001765">
    <property type="term" value="P:membrane raft assembly"/>
    <property type="evidence" value="ECO:0000315"/>
    <property type="project" value="CGD"/>
</dbReference>
<dbReference type="GO" id="GO:0055085">
    <property type="term" value="P:transmembrane transport"/>
    <property type="evidence" value="ECO:0000318"/>
    <property type="project" value="GO_Central"/>
</dbReference>
<dbReference type="FunFam" id="1.20.1250.20:FF:000172">
    <property type="entry name" value="MFS multidrug resistance transporter"/>
    <property type="match status" value="1"/>
</dbReference>
<dbReference type="Gene3D" id="1.20.1250.20">
    <property type="entry name" value="MFS general substrate transporter like domains"/>
    <property type="match status" value="1"/>
</dbReference>
<dbReference type="InterPro" id="IPR011701">
    <property type="entry name" value="MFS"/>
</dbReference>
<dbReference type="InterPro" id="IPR020846">
    <property type="entry name" value="MFS_dom"/>
</dbReference>
<dbReference type="InterPro" id="IPR036259">
    <property type="entry name" value="MFS_trans_sf"/>
</dbReference>
<dbReference type="PANTHER" id="PTHR23502">
    <property type="entry name" value="MAJOR FACILITATOR SUPERFAMILY"/>
    <property type="match status" value="1"/>
</dbReference>
<dbReference type="PANTHER" id="PTHR23502:SF51">
    <property type="entry name" value="QUINIDINE RESISTANCE PROTEIN 1-RELATED"/>
    <property type="match status" value="1"/>
</dbReference>
<dbReference type="Pfam" id="PF07690">
    <property type="entry name" value="MFS_1"/>
    <property type="match status" value="1"/>
</dbReference>
<dbReference type="SUPFAM" id="SSF103473">
    <property type="entry name" value="MFS general substrate transporter"/>
    <property type="match status" value="1"/>
</dbReference>
<dbReference type="PROSITE" id="PS50850">
    <property type="entry name" value="MFS"/>
    <property type="match status" value="1"/>
</dbReference>
<gene>
    <name type="primary">QDR</name>
    <name type="ordered locus">CAALFM_CR04210CA</name>
    <name type="ORF">CaO19.508</name>
    <name type="ORF">CaO19.8138</name>
</gene>
<protein>
    <recommendedName>
        <fullName evidence="9">MFS antiporter QDR1</fullName>
    </recommendedName>
</protein>
<comment type="function">
    <text evidence="7">MFS antiporter that does not display functional linkage as drug transporter and performs functions that significantly affect biofilm development and virulence. No substrate for transport has been identified yet, but plays an important role in the growth in the host.</text>
</comment>
<comment type="subcellular location">
    <subcellularLocation>
        <location evidence="7">Cell membrane</location>
        <topology evidence="7">Multi-pass membrane protein</topology>
    </subcellularLocation>
    <text evidence="7 8">Preferentially localizes to membrane rafts.</text>
</comment>
<comment type="induction">
    <text evidence="2 3 4 5 6">Expression is repressed by caspofungin and during chlamydospore formation. Also regulated during white-opaque switch, and by NRG1, TUP1 and HAP43.</text>
</comment>
<comment type="disruption phenotype">
    <text evidence="7">Leads to defects in biofilm architecture.</text>
</comment>
<comment type="similarity">
    <text evidence="9">Belongs to the major facilitator superfamily. CAR1 family.</text>
</comment>
<sequence length="509" mass="55432">MPGNREEFDIEKVLKSKKLEAIETSTEKKAPYTVFESTDKLLLIIVLSLVGFWSAISSPIYFPALPTLTKYFNTTPSVMNISVVAYLIFQGIAPTISSNLADTFGRRPVILGSIIVFCAVCIAISQTNVYWLLALLRCFQAAGIAPVFAISSGVAGDICTPANRGGMVGAVSGLQLAGNGIGGLVGAALISGFHTWRAIFIFLAIGGGVTFIFAFLVLAETSRRIVGNGSIRPKNVLNKAVLIYLPHFKNKITNDYSTLQPKGPFDILGPFKIFFQKEVFCTLLPSGMHFAAWTVSLTSLSTELESAKYNYSVMKVGLVYLPQGIACFIGSLIAGRCLNWYYRYRKNLYDKQMNDVPLNDRPPFNLVASRLTLTIVPLAMMVIGLSAFGWCLEYKKPIISIIISTILISFSASVMMSICTTMLVDLYPKQSGASASCVNLMRCWLAALFTGVLDKIISALGLGGTYTLLTGICLLTDLGLVYVLYTANQRFVNYVSPNQTAVNSDAEDY</sequence>
<accession>Q5A6P6</accession>
<accession>A0A1D8PSR1</accession>
<proteinExistence type="evidence at transcript level"/>
<feature type="chain" id="PRO_0000431599" description="MFS antiporter QDR1">
    <location>
        <begin position="1"/>
        <end position="509"/>
    </location>
</feature>
<feature type="topological domain" description="Cytoplasmic" evidence="9">
    <location>
        <begin position="1"/>
        <end position="41"/>
    </location>
</feature>
<feature type="transmembrane region" description="Helical; Name=1" evidence="1">
    <location>
        <begin position="42"/>
        <end position="62"/>
    </location>
</feature>
<feature type="topological domain" description="Extracellular" evidence="9">
    <location>
        <begin position="63"/>
        <end position="75"/>
    </location>
</feature>
<feature type="transmembrane region" description="Helical; Name=2" evidence="1">
    <location>
        <begin position="76"/>
        <end position="96"/>
    </location>
</feature>
<feature type="topological domain" description="Cytoplasmic" evidence="9">
    <location>
        <begin position="97"/>
        <end position="106"/>
    </location>
</feature>
<feature type="transmembrane region" description="Helical; Name=3" evidence="1">
    <location>
        <begin position="107"/>
        <end position="129"/>
    </location>
</feature>
<feature type="topological domain" description="Extracellular" evidence="9">
    <location>
        <begin position="130"/>
        <end position="132"/>
    </location>
</feature>
<feature type="transmembrane region" description="Helical; Name=4" evidence="1">
    <location>
        <begin position="133"/>
        <end position="155"/>
    </location>
</feature>
<feature type="topological domain" description="Cytoplasmic" evidence="9">
    <location>
        <begin position="156"/>
        <end position="169"/>
    </location>
</feature>
<feature type="transmembrane region" description="Helical; Name=5" evidence="1">
    <location>
        <begin position="170"/>
        <end position="190"/>
    </location>
</feature>
<feature type="topological domain" description="Extracellular" evidence="9">
    <location>
        <begin position="191"/>
        <end position="197"/>
    </location>
</feature>
<feature type="transmembrane region" description="Helical; Name=6" evidence="1">
    <location>
        <begin position="198"/>
        <end position="218"/>
    </location>
</feature>
<feature type="topological domain" description="Cytoplasmic" evidence="9">
    <location>
        <begin position="219"/>
        <end position="278"/>
    </location>
</feature>
<feature type="transmembrane region" description="Helical; Name=7" evidence="1">
    <location>
        <begin position="279"/>
        <end position="299"/>
    </location>
</feature>
<feature type="topological domain" description="Extracellular" evidence="9">
    <location>
        <begin position="300"/>
        <end position="312"/>
    </location>
</feature>
<feature type="transmembrane region" description="Helical; Name=8" evidence="1">
    <location>
        <begin position="313"/>
        <end position="333"/>
    </location>
</feature>
<feature type="topological domain" description="Cytoplasmic" evidence="9">
    <location>
        <begin position="334"/>
        <end position="370"/>
    </location>
</feature>
<feature type="transmembrane region" description="Helical; Name=9" evidence="1">
    <location>
        <begin position="371"/>
        <end position="391"/>
    </location>
</feature>
<feature type="topological domain" description="Extracellular" evidence="9">
    <location>
        <begin position="392"/>
        <end position="397"/>
    </location>
</feature>
<feature type="transmembrane region" description="Helical; Name=10" evidence="1">
    <location>
        <begin position="398"/>
        <end position="418"/>
    </location>
</feature>
<feature type="topological domain" description="Cytoplasmic" evidence="9">
    <location>
        <begin position="419"/>
        <end position="432"/>
    </location>
</feature>
<feature type="transmembrane region" description="Helical; Name=11" evidence="1">
    <location>
        <begin position="433"/>
        <end position="453"/>
    </location>
</feature>
<feature type="topological domain" description="Extracellular" evidence="9">
    <location>
        <begin position="454"/>
        <end position="455"/>
    </location>
</feature>
<feature type="transmembrane region" description="Helical; Name=12" evidence="1">
    <location>
        <begin position="456"/>
        <end position="476"/>
    </location>
</feature>
<feature type="topological domain" description="Cytoplasmic" evidence="9">
    <location>
        <begin position="477"/>
        <end position="509"/>
    </location>
</feature>
<name>QDR1_CANAL</name>
<organism>
    <name type="scientific">Candida albicans (strain SC5314 / ATCC MYA-2876)</name>
    <name type="common">Yeast</name>
    <dbReference type="NCBI Taxonomy" id="237561"/>
    <lineage>
        <taxon>Eukaryota</taxon>
        <taxon>Fungi</taxon>
        <taxon>Dikarya</taxon>
        <taxon>Ascomycota</taxon>
        <taxon>Saccharomycotina</taxon>
        <taxon>Pichiomycetes</taxon>
        <taxon>Debaryomycetaceae</taxon>
        <taxon>Candida/Lodderomyces clade</taxon>
        <taxon>Candida</taxon>
    </lineage>
</organism>
<evidence type="ECO:0000255" key="1"/>
<evidence type="ECO:0000269" key="2">
    <source>
    </source>
</evidence>
<evidence type="ECO:0000269" key="3">
    <source>
    </source>
</evidence>
<evidence type="ECO:0000269" key="4">
    <source>
    </source>
</evidence>
<evidence type="ECO:0000269" key="5">
    <source>
    </source>
</evidence>
<evidence type="ECO:0000269" key="6">
    <source>
    </source>
</evidence>
<evidence type="ECO:0000269" key="7">
    <source>
    </source>
</evidence>
<evidence type="ECO:0000303" key="8">
    <source>
    </source>
</evidence>
<evidence type="ECO:0000305" key="9"/>